<keyword id="KW-0378">Hydrolase</keyword>
<keyword id="KW-1185">Reference proteome</keyword>
<reference key="1">
    <citation type="journal article" date="2004" name="Science">
        <title>The 1.2-megabase genome sequence of Mimivirus.</title>
        <authorList>
            <person name="Raoult D."/>
            <person name="Audic S."/>
            <person name="Robert C."/>
            <person name="Abergel C."/>
            <person name="Renesto P."/>
            <person name="Ogata H."/>
            <person name="La Scola B."/>
            <person name="Susan M."/>
            <person name="Claverie J.-M."/>
        </authorList>
    </citation>
    <scope>NUCLEOTIDE SEQUENCE [LARGE SCALE GENOMIC DNA]</scope>
    <source>
        <strain>Rowbotham-Bradford</strain>
    </source>
</reference>
<protein>
    <recommendedName>
        <fullName>Putative ADP-ribosyl glycohydrolase L543</fullName>
        <ecNumber>3.2.2.-</ecNumber>
    </recommendedName>
</protein>
<organism>
    <name type="scientific">Acanthamoeba polyphaga mimivirus</name>
    <name type="common">APMV</name>
    <dbReference type="NCBI Taxonomy" id="212035"/>
    <lineage>
        <taxon>Viruses</taxon>
        <taxon>Varidnaviria</taxon>
        <taxon>Bamfordvirae</taxon>
        <taxon>Nucleocytoviricota</taxon>
        <taxon>Megaviricetes</taxon>
        <taxon>Imitervirales</taxon>
        <taxon>Mimiviridae</taxon>
        <taxon>Megamimivirinae</taxon>
        <taxon>Mimivirus</taxon>
        <taxon>Mimivirus bradfordmassiliense</taxon>
    </lineage>
</organism>
<dbReference type="EC" id="3.2.2.-"/>
<dbReference type="EMBL" id="AY653733">
    <property type="protein sequence ID" value="AAV50807.1"/>
    <property type="molecule type" value="Genomic_DNA"/>
</dbReference>
<dbReference type="SMR" id="Q5UQA6"/>
<dbReference type="KEGG" id="vg:9925177"/>
<dbReference type="OrthoDB" id="10153at10239"/>
<dbReference type="Proteomes" id="UP000001134">
    <property type="component" value="Genome"/>
</dbReference>
<dbReference type="GO" id="GO:0016787">
    <property type="term" value="F:hydrolase activity"/>
    <property type="evidence" value="ECO:0007669"/>
    <property type="project" value="UniProtKB-KW"/>
</dbReference>
<dbReference type="Gene3D" id="1.10.4080.10">
    <property type="entry name" value="ADP-ribosylation/Crystallin J1"/>
    <property type="match status" value="1"/>
</dbReference>
<dbReference type="InterPro" id="IPR050792">
    <property type="entry name" value="ADP-ribosylglycohydrolase"/>
</dbReference>
<dbReference type="InterPro" id="IPR005502">
    <property type="entry name" value="Ribosyl_crysJ1"/>
</dbReference>
<dbReference type="InterPro" id="IPR036705">
    <property type="entry name" value="Ribosyl_crysJ1_sf"/>
</dbReference>
<dbReference type="PANTHER" id="PTHR16222">
    <property type="entry name" value="ADP-RIBOSYLGLYCOHYDROLASE"/>
    <property type="match status" value="1"/>
</dbReference>
<dbReference type="PANTHER" id="PTHR16222:SF24">
    <property type="entry name" value="ADP-RIBOSYLHYDROLASE ARH3"/>
    <property type="match status" value="1"/>
</dbReference>
<dbReference type="Pfam" id="PF03747">
    <property type="entry name" value="ADP_ribosyl_GH"/>
    <property type="match status" value="1"/>
</dbReference>
<dbReference type="SUPFAM" id="SSF101478">
    <property type="entry name" value="ADP-ribosylglycohydrolase"/>
    <property type="match status" value="1"/>
</dbReference>
<feature type="chain" id="PRO_0000309197" description="Putative ADP-ribosyl glycohydrolase L543">
    <location>
        <begin position="1"/>
        <end position="330"/>
    </location>
</feature>
<accession>Q5UQA6</accession>
<evidence type="ECO:0000305" key="1"/>
<comment type="similarity">
    <text evidence="1">Belongs to the ADP-ribosylglycohydrolase family.</text>
</comment>
<gene>
    <name type="ordered locus">MIMI_L543</name>
</gene>
<proteinExistence type="inferred from homology"/>
<sequence length="330" mass="37602">MNNMIELRARNAILGAMVGDSLGSTFEFTKQKQAANKLAQYNYLSDGLIGKGPFGLKPGQFTDDTEIALAIMSVIHEYGYYDQYRVAEKYHEWYNSNPFDIGNTTKNSLSQNSCSDMIKASRKYNFGSMSNGSLMRLFGLVPMFYDRVPSSRTTKFIMKAIQQDIILTHSNPEMGPIAIIYGLMLWHAIQGHNASNVYKYGKLLAEKYHSDLYLSIYLSVDSEYDFFDYNDTRYHLNQIDSSNFGFVGFSIWLMLRSLKKHSDYRNAIIEIVSHGGDTDTNACITGALFGALYYNTIPSVWIDSVLNCQATERYQNYPIANPKIWSQWLP</sequence>
<organismHost>
    <name type="scientific">Acanthamoeba polyphaga</name>
    <name type="common">Amoeba</name>
    <dbReference type="NCBI Taxonomy" id="5757"/>
</organismHost>
<name>ADPRM_MIMIV</name>